<evidence type="ECO:0000250" key="1">
    <source>
        <dbReference type="UniProtKB" id="Q81ST7"/>
    </source>
</evidence>
<evidence type="ECO:0000255" key="2"/>
<evidence type="ECO:0000269" key="3">
    <source>
    </source>
</evidence>
<evidence type="ECO:0000269" key="4">
    <source>
    </source>
</evidence>
<evidence type="ECO:0000303" key="5">
    <source>
    </source>
</evidence>
<evidence type="ECO:0000303" key="6">
    <source>
    </source>
</evidence>
<evidence type="ECO:0000303" key="7">
    <source>
    </source>
</evidence>
<evidence type="ECO:0000305" key="8"/>
<evidence type="ECO:0000305" key="9">
    <source>
    </source>
</evidence>
<evidence type="ECO:0000312" key="10">
    <source>
        <dbReference type="EMBL" id="ACH97135.1"/>
    </source>
</evidence>
<keyword id="KW-0328">Glycosyltransferase</keyword>
<keyword id="KW-0448">Lipopolysaccharide biosynthesis</keyword>
<keyword id="KW-0472">Membrane</keyword>
<keyword id="KW-0808">Transferase</keyword>
<keyword id="KW-0812">Transmembrane</keyword>
<keyword id="KW-1133">Transmembrane helix</keyword>
<name>GNACT_ECOLX</name>
<reference evidence="10" key="1">
    <citation type="journal article" date="2009" name="FEMS Immunol. Med. Microbiol.">
        <title>Genetic and structural analyses of Escherichia coli O107 and O117 O-antigens.</title>
        <authorList>
            <person name="Wang Q."/>
            <person name="Perepelov A.V."/>
            <person name="Feng L."/>
            <person name="Knirel Y.A."/>
            <person name="Li Y."/>
            <person name="Wang L."/>
        </authorList>
    </citation>
    <scope>NUCLEOTIDE SEQUENCE [GENOMIC DNA]</scope>
</reference>
<reference key="2">
    <citation type="journal article" date="2012" name="Glycobiology">
        <title>Identification of the two glycosyltransferase genes responsible for the difference between Escherichia coli O107 and O117 O-antigens.</title>
        <authorList>
            <person name="Wang Q."/>
            <person name="Perepelov A.V."/>
            <person name="Wen L."/>
            <person name="Shashkov A.S."/>
            <person name="Wang X."/>
            <person name="Guo X."/>
            <person name="Knirel Y.A."/>
            <person name="Wang L."/>
        </authorList>
    </citation>
    <scope>FUNCTION</scope>
    <scope>PATHWAY</scope>
    <scope>DISRUPTION PHENOTYPE</scope>
</reference>
<reference key="3">
    <citation type="journal article" date="2020" name="Glycobiology">
        <title>The wclY gene of Escherichia coli serotype O117 encodes an alpha1,4-glucosyltransferase with strict acceptor specificity but broad donor specificity.</title>
        <authorList>
            <person name="Kocev A."/>
            <person name="Melamed J."/>
            <person name="Torgov V."/>
            <person name="Danilov L."/>
            <person name="Veselovsky V."/>
            <person name="Brockhausen I."/>
        </authorList>
    </citation>
    <scope>FUNCTION</scope>
    <scope>CATALYTIC ACTIVITY</scope>
    <scope>PATHWAY</scope>
    <scope>MOTIF</scope>
</reference>
<protein>
    <recommendedName>
        <fullName>O-antigen biosynthesis glycosyltransferase WclY</fullName>
        <ecNumber evidence="4">2.4.1.-</ecNumber>
    </recommendedName>
    <alternativeName>
        <fullName evidence="7">Alpha-1,4-N-acetylglucosamine transferase</fullName>
    </alternativeName>
    <alternativeName>
        <fullName evidence="5 6">Glycosyltransferase</fullName>
    </alternativeName>
    <alternativeName>
        <fullName evidence="7">N-acetylglucosamine transferase</fullName>
        <shortName evidence="7">GlcNAc-T</shortName>
    </alternativeName>
</protein>
<accession>B8QSK0</accession>
<gene>
    <name evidence="5 6 7 10" type="primary">wclY</name>
</gene>
<dbReference type="EC" id="2.4.1.-" evidence="4"/>
<dbReference type="EMBL" id="EU694095">
    <property type="protein sequence ID" value="ACH97135.1"/>
    <property type="molecule type" value="Genomic_DNA"/>
</dbReference>
<dbReference type="RefSeq" id="WP_061353877.1">
    <property type="nucleotide sequence ID" value="NZ_NMOG01000153.1"/>
</dbReference>
<dbReference type="SMR" id="B8QSK0"/>
<dbReference type="CAZy" id="GT4">
    <property type="family name" value="Glycosyltransferase Family 4"/>
</dbReference>
<dbReference type="BioCyc" id="MetaCyc:MONOMER-21524"/>
<dbReference type="UniPathway" id="UPA00281"/>
<dbReference type="GO" id="GO:0009276">
    <property type="term" value="C:Gram-negative-bacterium-type cell wall"/>
    <property type="evidence" value="ECO:0000314"/>
    <property type="project" value="UniProtKB"/>
</dbReference>
<dbReference type="GO" id="GO:0016020">
    <property type="term" value="C:membrane"/>
    <property type="evidence" value="ECO:0007669"/>
    <property type="project" value="UniProtKB-SubCell"/>
</dbReference>
<dbReference type="GO" id="GO:0016757">
    <property type="term" value="F:glycosyltransferase activity"/>
    <property type="evidence" value="ECO:0000314"/>
    <property type="project" value="UniProtKB"/>
</dbReference>
<dbReference type="GO" id="GO:0043165">
    <property type="term" value="P:Gram-negative-bacterium-type cell outer membrane assembly"/>
    <property type="evidence" value="ECO:0000314"/>
    <property type="project" value="UniProtKB"/>
</dbReference>
<dbReference type="GO" id="GO:0009103">
    <property type="term" value="P:lipopolysaccharide biosynthetic process"/>
    <property type="evidence" value="ECO:0000314"/>
    <property type="project" value="UniProtKB"/>
</dbReference>
<dbReference type="GO" id="GO:0009243">
    <property type="term" value="P:O antigen biosynthetic process"/>
    <property type="evidence" value="ECO:0000314"/>
    <property type="project" value="UniProtKB"/>
</dbReference>
<dbReference type="CDD" id="cd03801">
    <property type="entry name" value="GT4_PimA-like"/>
    <property type="match status" value="1"/>
</dbReference>
<dbReference type="Gene3D" id="3.40.50.2000">
    <property type="entry name" value="Glycogen Phosphorylase B"/>
    <property type="match status" value="2"/>
</dbReference>
<dbReference type="InterPro" id="IPR001296">
    <property type="entry name" value="Glyco_trans_1"/>
</dbReference>
<dbReference type="InterPro" id="IPR028098">
    <property type="entry name" value="Glyco_trans_4-like_N"/>
</dbReference>
<dbReference type="PANTHER" id="PTHR12526">
    <property type="entry name" value="GLYCOSYLTRANSFERASE"/>
    <property type="match status" value="1"/>
</dbReference>
<dbReference type="Pfam" id="PF13439">
    <property type="entry name" value="Glyco_transf_4"/>
    <property type="match status" value="1"/>
</dbReference>
<dbReference type="Pfam" id="PF00534">
    <property type="entry name" value="Glycos_transf_1"/>
    <property type="match status" value="1"/>
</dbReference>
<dbReference type="SUPFAM" id="SSF53756">
    <property type="entry name" value="UDP-Glycosyltransferase/glycogen phosphorylase"/>
    <property type="match status" value="1"/>
</dbReference>
<sequence length="353" mass="40915">MKIAYVVSSKKKCGPNIVILNIVKELANKHEMEIFFLDESDDDVFECVNVKSTQIKKASDLKEHLKRFDIIHSSGIRPDALVVLCKVIYRVKCKIITTIHNYVFQDLYYSYGLVKSLIWGLLWCSIWLFFDKLVILSKNADNYYWFLPSAKKNIIYNGIDDNDCLQNKKCNYRKEFNIPDDGILAGSCANLTKCKGIDLVIQTLTKEHKIYYIVAGDGIEKHNLINLVKARKLHERVYFIDFLDEPESFMSQLDVFLMPSRSEGFGLTVLESTKLGIPVITSNIPIFMELFDQMCLTFDIKNPSTLIDVITYAKKNRLHLSQKFHAIFQDRFTSSKMATKYENVYNNLFREVL</sequence>
<comment type="function">
    <text evidence="3 4">Involved in the assembly of the O-repeating unit during O-antigen biosynthesis (PubMed:21968437, PubMed:32421169). N-acetylglucosamine transferase accountable for the alpha-D-GlcNAc-1,4-beta-D-Gal linkage within the O-antigen (PubMed:32421169).</text>
</comment>
<comment type="pathway">
    <text evidence="3 4">Bacterial outer membrane biogenesis; LPS O-antigen biosynthesis.</text>
</comment>
<comment type="subcellular location">
    <subcellularLocation>
        <location evidence="2">Membrane</location>
        <topology evidence="2">Single-pass membrane protein</topology>
    </subcellularLocation>
</comment>
<comment type="disruption phenotype">
    <text evidence="3">Loss of LPS O-antigen production.</text>
</comment>
<comment type="miscellaneous">
    <text evidence="9">According to PubMed:32421169, the hydrophopic domain of this protein is likely to play a role in stabilizing the association of it with peripheral membrane or possibly, with the hydrophobic moiety of the acceptor substrate. However, a transmembrane domain is predicted by a program.</text>
</comment>
<comment type="similarity">
    <text evidence="8">Belongs to the glycosyltransferase group 1 family. Glycosyltransferase 4 subfamily.</text>
</comment>
<feature type="chain" id="PRO_0000458143" description="O-antigen biosynthesis glycosyltransferase WclY">
    <location>
        <begin position="1"/>
        <end position="353"/>
    </location>
</feature>
<feature type="transmembrane region" description="Helical" evidence="2">
    <location>
        <begin position="116"/>
        <end position="136"/>
    </location>
</feature>
<feature type="short sequence motif" description="E(x7)E glycosyltransferase motif" evidence="9">
    <location>
        <begin position="263"/>
        <end position="271"/>
    </location>
</feature>
<feature type="binding site" evidence="1">
    <location>
        <position position="190"/>
    </location>
    <ligand>
        <name>UDP</name>
        <dbReference type="ChEBI" id="CHEBI:58223"/>
    </ligand>
</feature>
<feature type="binding site" evidence="1">
    <location>
        <position position="271"/>
    </location>
    <ligand>
        <name>UDP</name>
        <dbReference type="ChEBI" id="CHEBI:58223"/>
    </ligand>
</feature>
<proteinExistence type="evidence at protein level"/>
<organism evidence="10">
    <name type="scientific">Escherichia coli</name>
    <dbReference type="NCBI Taxonomy" id="562"/>
    <lineage>
        <taxon>Bacteria</taxon>
        <taxon>Pseudomonadati</taxon>
        <taxon>Pseudomonadota</taxon>
        <taxon>Gammaproteobacteria</taxon>
        <taxon>Enterobacterales</taxon>
        <taxon>Enterobacteriaceae</taxon>
        <taxon>Escherichia</taxon>
    </lineage>
</organism>